<comment type="function">
    <text evidence="3">Expression of V.alginolyticus SecDF in an E.coli secDF mutant restores protein export in a Na(+)-dependent manner, strongly suggesting SecDF functions via cation-coupled protein translocation.</text>
</comment>
<comment type="function">
    <text evidence="1">Part of the Sec protein translocase complex. Interacts with the SecYEG preprotein conducting channel. SecDF uses the proton motive force (PMF) to complete protein translocation after the ATP-dependent function of SecA (By similarity).</text>
</comment>
<comment type="subunit">
    <text evidence="1">Forms a complex with SecD. Part of the essential Sec protein translocation apparatus which comprises SecA, SecYEG and auxiliary proteins SecDF-YajC and YidC (By similarity).</text>
</comment>
<comment type="subcellular location">
    <subcellularLocation>
        <location evidence="1">Cell membrane</location>
        <topology evidence="1">Multi-pass membrane protein</topology>
    </subcellularLocation>
</comment>
<comment type="similarity">
    <text evidence="4">Belongs to the SecD/SecF family. SecF subfamily.</text>
</comment>
<name>SECF_VIBAL</name>
<reference key="1">
    <citation type="submission" date="2010-08" db="EMBL/GenBank/DDBJ databases">
        <title>Structure and function of SecDF, a protein export-enhancing membrane component.</title>
        <authorList>
            <person name="Tsukazaki T."/>
            <person name="Mori H."/>
            <person name="Echizen Y."/>
            <person name="Ishitani R."/>
            <person name="Fukai S."/>
            <person name="Tanaka T."/>
            <person name="Sasaki Y."/>
            <person name="Mio K."/>
            <person name="Kuwata M."/>
            <person name="Perederina A."/>
            <person name="Vassylyev D.G."/>
            <person name="Kohno T."/>
            <person name="Sato C."/>
            <person name="Maturana A."/>
            <person name="Ito K."/>
            <person name="Nureki O."/>
        </authorList>
    </citation>
    <scope>NUCLEOTIDE SEQUENCE [GENOMIC DNA]</scope>
    <source>
        <strain>138-2</strain>
    </source>
</reference>
<reference key="2">
    <citation type="journal article" date="2011" name="Nature">
        <title>Structure and function of a membrane component SecDF that enhances protein export.</title>
        <authorList>
            <person name="Tsukazaki T."/>
            <person name="Mori H."/>
            <person name="Echizen Y."/>
            <person name="Ishitani R."/>
            <person name="Fukai S."/>
            <person name="Tanaka T."/>
            <person name="Perederina A."/>
            <person name="Vassylyev D.G."/>
            <person name="Kohno T."/>
            <person name="Maturana A.D."/>
            <person name="Ito K."/>
            <person name="Nureki O."/>
        </authorList>
    </citation>
    <scope>FUNCTION IN E.COLI</scope>
    <scope>FUNCTION IN PROTEIN TRANSLOCATION</scope>
    <source>
        <strain>138-2</strain>
    </source>
</reference>
<feature type="chain" id="PRO_0000412707" description="Protein translocase subunit SecF">
    <location>
        <begin position="1"/>
        <end position="315"/>
    </location>
</feature>
<feature type="transmembrane region" description="Helical" evidence="2">
    <location>
        <begin position="19"/>
        <end position="39"/>
    </location>
</feature>
<feature type="transmembrane region" description="Helical" evidence="2">
    <location>
        <begin position="135"/>
        <end position="155"/>
    </location>
</feature>
<feature type="transmembrane region" description="Helical" evidence="2">
    <location>
        <begin position="164"/>
        <end position="184"/>
    </location>
</feature>
<feature type="transmembrane region" description="Helical" evidence="2">
    <location>
        <begin position="191"/>
        <end position="211"/>
    </location>
</feature>
<feature type="transmembrane region" description="Helical" evidence="2">
    <location>
        <begin position="249"/>
        <end position="269"/>
    </location>
</feature>
<feature type="transmembrane region" description="Helical" evidence="2">
    <location>
        <begin position="270"/>
        <end position="290"/>
    </location>
</feature>
<sequence>MFQILKAEKTIGFMRWSKVAFVFSIFMIAASIFTLSTKWLNWGLDFTGGTLIEVGFEKPANLEKIRTALDAKGFGDATVQNFGSAREVMVRLRPRDDVSGETLGNQIIGAIKDGTGESVEMRRIEFVGPNVGDELTEAGGLAILVSLICILLYVSMRFEWRLAAGAVMALAHDIIITLGVFSFLQIEVDLTIVAALLTVVGYSLNDTIVVFDRIRENFRKMRKGEPADIMDASITQTLSRTLITSGTTLFVVIALFMQGGAMIHGFATALLLGITVGTYSSIYVASALALKLGIQKEHLMPPQVEKEGAEFDEMP</sequence>
<evidence type="ECO:0000250" key="1"/>
<evidence type="ECO:0000255" key="2"/>
<evidence type="ECO:0000269" key="3">
    <source>
    </source>
</evidence>
<evidence type="ECO:0000305" key="4"/>
<proteinExistence type="evidence at protein level"/>
<gene>
    <name type="primary">secF</name>
</gene>
<accession>E9RGS4</accession>
<keyword id="KW-1003">Cell membrane</keyword>
<keyword id="KW-0472">Membrane</keyword>
<keyword id="KW-0653">Protein transport</keyword>
<keyword id="KW-0811">Translocation</keyword>
<keyword id="KW-0812">Transmembrane</keyword>
<keyword id="KW-1133">Transmembrane helix</keyword>
<keyword id="KW-0813">Transport</keyword>
<protein>
    <recommendedName>
        <fullName>Protein translocase subunit SecF</fullName>
    </recommendedName>
</protein>
<dbReference type="EMBL" id="AB583187">
    <property type="protein sequence ID" value="BAJ78590.1"/>
    <property type="molecule type" value="Genomic_DNA"/>
</dbReference>
<dbReference type="RefSeq" id="WP_005391572.1">
    <property type="nucleotide sequence ID" value="NZ_PZOD01000080.1"/>
</dbReference>
<dbReference type="SMR" id="E9RGS4"/>
<dbReference type="STRING" id="663.BAU10_01935"/>
<dbReference type="GeneID" id="57841583"/>
<dbReference type="eggNOG" id="COG0341">
    <property type="taxonomic scope" value="Bacteria"/>
</dbReference>
<dbReference type="GO" id="GO:0005886">
    <property type="term" value="C:plasma membrane"/>
    <property type="evidence" value="ECO:0007669"/>
    <property type="project" value="UniProtKB-SubCell"/>
</dbReference>
<dbReference type="GO" id="GO:0015450">
    <property type="term" value="F:protein-transporting ATPase activity"/>
    <property type="evidence" value="ECO:0007669"/>
    <property type="project" value="InterPro"/>
</dbReference>
<dbReference type="GO" id="GO:0065002">
    <property type="term" value="P:intracellular protein transmembrane transport"/>
    <property type="evidence" value="ECO:0007669"/>
    <property type="project" value="UniProtKB-UniRule"/>
</dbReference>
<dbReference type="GO" id="GO:0006605">
    <property type="term" value="P:protein targeting"/>
    <property type="evidence" value="ECO:0007669"/>
    <property type="project" value="UniProtKB-UniRule"/>
</dbReference>
<dbReference type="GO" id="GO:0043952">
    <property type="term" value="P:protein transport by the Sec complex"/>
    <property type="evidence" value="ECO:0007669"/>
    <property type="project" value="UniProtKB-UniRule"/>
</dbReference>
<dbReference type="FunFam" id="1.20.1640.10:FF:000006">
    <property type="entry name" value="Protein-export membrane protein SecF"/>
    <property type="match status" value="1"/>
</dbReference>
<dbReference type="Gene3D" id="1.20.1640.10">
    <property type="entry name" value="Multidrug efflux transporter AcrB transmembrane domain"/>
    <property type="match status" value="1"/>
</dbReference>
<dbReference type="HAMAP" id="MF_01464_B">
    <property type="entry name" value="SecF_B"/>
    <property type="match status" value="1"/>
</dbReference>
<dbReference type="InterPro" id="IPR022813">
    <property type="entry name" value="SecD/SecF_arch_bac"/>
</dbReference>
<dbReference type="InterPro" id="IPR022645">
    <property type="entry name" value="SecD/SecF_bac"/>
</dbReference>
<dbReference type="InterPro" id="IPR022646">
    <property type="entry name" value="SecD/SecF_CS"/>
</dbReference>
<dbReference type="InterPro" id="IPR048634">
    <property type="entry name" value="SecD_SecF_C"/>
</dbReference>
<dbReference type="InterPro" id="IPR055344">
    <property type="entry name" value="SecD_SecF_C_bact"/>
</dbReference>
<dbReference type="InterPro" id="IPR005665">
    <property type="entry name" value="SecF_bac"/>
</dbReference>
<dbReference type="NCBIfam" id="TIGR00916">
    <property type="entry name" value="2A0604s01"/>
    <property type="match status" value="1"/>
</dbReference>
<dbReference type="NCBIfam" id="TIGR00966">
    <property type="entry name" value="transloc_SecF"/>
    <property type="match status" value="1"/>
</dbReference>
<dbReference type="PANTHER" id="PTHR30081:SF8">
    <property type="entry name" value="PROTEIN TRANSLOCASE SUBUNIT SECF"/>
    <property type="match status" value="1"/>
</dbReference>
<dbReference type="PANTHER" id="PTHR30081">
    <property type="entry name" value="PROTEIN-EXPORT MEMBRANE PROTEIN SEC"/>
    <property type="match status" value="1"/>
</dbReference>
<dbReference type="Pfam" id="PF07549">
    <property type="entry name" value="Sec_GG"/>
    <property type="match status" value="1"/>
</dbReference>
<dbReference type="Pfam" id="PF02355">
    <property type="entry name" value="SecD_SecF_C"/>
    <property type="match status" value="1"/>
</dbReference>
<dbReference type="PRINTS" id="PR01755">
    <property type="entry name" value="SECFTRNLCASE"/>
</dbReference>
<dbReference type="SUPFAM" id="SSF82866">
    <property type="entry name" value="Multidrug efflux transporter AcrB transmembrane domain"/>
    <property type="match status" value="1"/>
</dbReference>
<organism>
    <name type="scientific">Vibrio alginolyticus</name>
    <dbReference type="NCBI Taxonomy" id="663"/>
    <lineage>
        <taxon>Bacteria</taxon>
        <taxon>Pseudomonadati</taxon>
        <taxon>Pseudomonadota</taxon>
        <taxon>Gammaproteobacteria</taxon>
        <taxon>Vibrionales</taxon>
        <taxon>Vibrionaceae</taxon>
        <taxon>Vibrio</taxon>
    </lineage>
</organism>